<comment type="subunit">
    <text evidence="1">Part of the 50S ribosomal subunit.</text>
</comment>
<comment type="similarity">
    <text evidence="1">Belongs to the universal ribosomal protein uL30 family.</text>
</comment>
<keyword id="KW-1185">Reference proteome</keyword>
<keyword id="KW-0687">Ribonucleoprotein</keyword>
<keyword id="KW-0689">Ribosomal protein</keyword>
<proteinExistence type="inferred from homology"/>
<protein>
    <recommendedName>
        <fullName evidence="1">Large ribosomal subunit protein uL30</fullName>
    </recommendedName>
    <alternativeName>
        <fullName evidence="2">50S ribosomal protein L30</fullName>
    </alternativeName>
</protein>
<sequence>MARLKVTQVRSEIGTKQNQRDSLRSLGLKRINDVVVKEDRPEIRGMIFTVNHLVKVEEVE</sequence>
<dbReference type="EMBL" id="CP000667">
    <property type="protein sequence ID" value="ABP56335.1"/>
    <property type="molecule type" value="Genomic_DNA"/>
</dbReference>
<dbReference type="RefSeq" id="WP_012015110.1">
    <property type="nucleotide sequence ID" value="NC_009380.1"/>
</dbReference>
<dbReference type="SMR" id="A4XBM8"/>
<dbReference type="STRING" id="369723.Strop_3905"/>
<dbReference type="GeneID" id="95800222"/>
<dbReference type="KEGG" id="stp:Strop_3905"/>
<dbReference type="PATRIC" id="fig|369723.5.peg.4031"/>
<dbReference type="eggNOG" id="COG1841">
    <property type="taxonomic scope" value="Bacteria"/>
</dbReference>
<dbReference type="HOGENOM" id="CLU_131047_2_0_11"/>
<dbReference type="Proteomes" id="UP000000235">
    <property type="component" value="Chromosome"/>
</dbReference>
<dbReference type="GO" id="GO:0022625">
    <property type="term" value="C:cytosolic large ribosomal subunit"/>
    <property type="evidence" value="ECO:0007669"/>
    <property type="project" value="TreeGrafter"/>
</dbReference>
<dbReference type="GO" id="GO:0003735">
    <property type="term" value="F:structural constituent of ribosome"/>
    <property type="evidence" value="ECO:0007669"/>
    <property type="project" value="InterPro"/>
</dbReference>
<dbReference type="GO" id="GO:0006412">
    <property type="term" value="P:translation"/>
    <property type="evidence" value="ECO:0007669"/>
    <property type="project" value="UniProtKB-UniRule"/>
</dbReference>
<dbReference type="CDD" id="cd01658">
    <property type="entry name" value="Ribosomal_L30"/>
    <property type="match status" value="1"/>
</dbReference>
<dbReference type="FunFam" id="3.30.1390.20:FF:000001">
    <property type="entry name" value="50S ribosomal protein L30"/>
    <property type="match status" value="1"/>
</dbReference>
<dbReference type="Gene3D" id="3.30.1390.20">
    <property type="entry name" value="Ribosomal protein L30, ferredoxin-like fold domain"/>
    <property type="match status" value="1"/>
</dbReference>
<dbReference type="HAMAP" id="MF_01371_B">
    <property type="entry name" value="Ribosomal_uL30_B"/>
    <property type="match status" value="1"/>
</dbReference>
<dbReference type="InterPro" id="IPR036919">
    <property type="entry name" value="Ribo_uL30_ferredoxin-like_sf"/>
</dbReference>
<dbReference type="InterPro" id="IPR005996">
    <property type="entry name" value="Ribosomal_uL30_bac-type"/>
</dbReference>
<dbReference type="InterPro" id="IPR016082">
    <property type="entry name" value="Ribosomal_uL30_ferredoxin-like"/>
</dbReference>
<dbReference type="NCBIfam" id="TIGR01308">
    <property type="entry name" value="rpmD_bact"/>
    <property type="match status" value="1"/>
</dbReference>
<dbReference type="PANTHER" id="PTHR15892:SF2">
    <property type="entry name" value="LARGE RIBOSOMAL SUBUNIT PROTEIN UL30M"/>
    <property type="match status" value="1"/>
</dbReference>
<dbReference type="PANTHER" id="PTHR15892">
    <property type="entry name" value="MITOCHONDRIAL RIBOSOMAL PROTEIN L30"/>
    <property type="match status" value="1"/>
</dbReference>
<dbReference type="Pfam" id="PF00327">
    <property type="entry name" value="Ribosomal_L30"/>
    <property type="match status" value="1"/>
</dbReference>
<dbReference type="PIRSF" id="PIRSF002211">
    <property type="entry name" value="Ribosomal_L30_bac-type"/>
    <property type="match status" value="1"/>
</dbReference>
<dbReference type="SUPFAM" id="SSF55129">
    <property type="entry name" value="Ribosomal protein L30p/L7e"/>
    <property type="match status" value="1"/>
</dbReference>
<accession>A4XBM8</accession>
<name>RL30_SALTO</name>
<gene>
    <name evidence="1" type="primary">rpmD</name>
    <name type="ordered locus">Strop_3905</name>
</gene>
<organism>
    <name type="scientific">Salinispora tropica (strain ATCC BAA-916 / DSM 44818 / JCM 13857 / NBRC 105044 / CNB-440)</name>
    <dbReference type="NCBI Taxonomy" id="369723"/>
    <lineage>
        <taxon>Bacteria</taxon>
        <taxon>Bacillati</taxon>
        <taxon>Actinomycetota</taxon>
        <taxon>Actinomycetes</taxon>
        <taxon>Micromonosporales</taxon>
        <taxon>Micromonosporaceae</taxon>
        <taxon>Salinispora</taxon>
    </lineage>
</organism>
<evidence type="ECO:0000255" key="1">
    <source>
        <dbReference type="HAMAP-Rule" id="MF_01371"/>
    </source>
</evidence>
<evidence type="ECO:0000305" key="2"/>
<feature type="chain" id="PRO_1000087264" description="Large ribosomal subunit protein uL30">
    <location>
        <begin position="1"/>
        <end position="60"/>
    </location>
</feature>
<reference key="1">
    <citation type="journal article" date="2007" name="Proc. Natl. Acad. Sci. U.S.A.">
        <title>Genome sequencing reveals complex secondary metabolome in the marine actinomycete Salinispora tropica.</title>
        <authorList>
            <person name="Udwary D.W."/>
            <person name="Zeigler L."/>
            <person name="Asolkar R.N."/>
            <person name="Singan V."/>
            <person name="Lapidus A."/>
            <person name="Fenical W."/>
            <person name="Jensen P.R."/>
            <person name="Moore B.S."/>
        </authorList>
    </citation>
    <scope>NUCLEOTIDE SEQUENCE [LARGE SCALE GENOMIC DNA]</scope>
    <source>
        <strain>ATCC BAA-916 / DSM 44818 / JCM 13857 / NBRC 105044 / CNB-440</strain>
    </source>
</reference>